<reference key="1">
    <citation type="journal article" date="1998" name="Science">
        <title>Genome sequence of the nematode C. elegans: a platform for investigating biology.</title>
        <authorList>
            <consortium name="The C. elegans sequencing consortium"/>
        </authorList>
    </citation>
    <scope>NUCLEOTIDE SEQUENCE [LARGE SCALE GENOMIC DNA]</scope>
    <source>
        <strain>Bristol N2</strain>
    </source>
</reference>
<proteinExistence type="inferred from homology"/>
<organism>
    <name type="scientific">Caenorhabditis elegans</name>
    <dbReference type="NCBI Taxonomy" id="6239"/>
    <lineage>
        <taxon>Eukaryota</taxon>
        <taxon>Metazoa</taxon>
        <taxon>Ecdysozoa</taxon>
        <taxon>Nematoda</taxon>
        <taxon>Chromadorea</taxon>
        <taxon>Rhabditida</taxon>
        <taxon>Rhabditina</taxon>
        <taxon>Rhabditomorpha</taxon>
        <taxon>Rhabditoidea</taxon>
        <taxon>Rhabditidae</taxon>
        <taxon>Peloderinae</taxon>
        <taxon>Caenorhabditis</taxon>
    </lineage>
</organism>
<sequence length="192" mass="21393">MFLHLILLAGLAPVVYLWCTPFIACNQTVYGDFSDIEKGMKVILLGRPFQKMDQLIITGEYYNNGSEVMDDAAFTVGLSKGLIMHQLGMDDLEQYLLTTTLGASEERMNISGKLLGRKKDTFLIVEKAKPNVTCADPFTFVIKSQDGYGFAFGSVQSSELKYTAQVALQYPKNEQSQSVFFDGKIKTSKIEL</sequence>
<evidence type="ECO:0000255" key="1"/>
<keyword id="KW-1185">Reference proteome</keyword>
<keyword id="KW-0732">Signal</keyword>
<gene>
    <name type="ORF">ZK1290.11</name>
</gene>
<name>YOFB_CAEEL</name>
<dbReference type="EMBL" id="FO080700">
    <property type="protein sequence ID" value="CCD65941.1"/>
    <property type="molecule type" value="Genomic_DNA"/>
</dbReference>
<dbReference type="PIR" id="T34511">
    <property type="entry name" value="T34511"/>
</dbReference>
<dbReference type="RefSeq" id="NP_495586.2">
    <property type="nucleotide sequence ID" value="NM_063185.2"/>
</dbReference>
<dbReference type="FunCoup" id="Q09338">
    <property type="interactions" value="1522"/>
</dbReference>
<dbReference type="STRING" id="6239.ZK1290.11.1"/>
<dbReference type="PaxDb" id="6239-ZK1290.11"/>
<dbReference type="PeptideAtlas" id="Q09338"/>
<dbReference type="EnsemblMetazoa" id="ZK1290.11.1">
    <property type="protein sequence ID" value="ZK1290.11.1"/>
    <property type="gene ID" value="WBGene00022892"/>
</dbReference>
<dbReference type="GeneID" id="174228"/>
<dbReference type="KEGG" id="cel:CELE_ZK1290.11"/>
<dbReference type="UCSC" id="ZK1290.11">
    <property type="organism name" value="c. elegans"/>
</dbReference>
<dbReference type="AGR" id="WB:WBGene00022892"/>
<dbReference type="CTD" id="174228"/>
<dbReference type="WormBase" id="ZK1290.11">
    <property type="protein sequence ID" value="CE40180"/>
    <property type="gene ID" value="WBGene00022892"/>
</dbReference>
<dbReference type="eggNOG" id="ENOG502TGY1">
    <property type="taxonomic scope" value="Eukaryota"/>
</dbReference>
<dbReference type="HOGENOM" id="CLU_106871_0_0_1"/>
<dbReference type="InParanoid" id="Q09338"/>
<dbReference type="OMA" id="CTPFIAC"/>
<dbReference type="OrthoDB" id="5777141at2759"/>
<dbReference type="PRO" id="PR:Q09338"/>
<dbReference type="Proteomes" id="UP000001940">
    <property type="component" value="Chromosome II"/>
</dbReference>
<dbReference type="Bgee" id="WBGene00022892">
    <property type="expression patterns" value="Expressed in adult organism"/>
</dbReference>
<feature type="signal peptide" evidence="1">
    <location>
        <begin position="1"/>
        <end position="17"/>
    </location>
</feature>
<feature type="chain" id="PRO_0000065568" description="Uncharacterized protein ZK1290.11">
    <location>
        <begin position="18"/>
        <end position="192"/>
    </location>
</feature>
<accession>Q09338</accession>
<protein>
    <recommendedName>
        <fullName>Uncharacterized protein ZK1290.11</fullName>
    </recommendedName>
</protein>